<accession>A0Q2Z8</accession>
<reference key="1">
    <citation type="journal article" date="2006" name="Nat. Biotechnol.">
        <title>The genome and transcriptomes of the anti-tumor agent Clostridium novyi-NT.</title>
        <authorList>
            <person name="Bettegowda C."/>
            <person name="Huang X."/>
            <person name="Lin J."/>
            <person name="Cheong I."/>
            <person name="Kohli M."/>
            <person name="Szabo S.A."/>
            <person name="Zhang X."/>
            <person name="Diaz L.A. Jr."/>
            <person name="Velculescu V.E."/>
            <person name="Parmigiani G."/>
            <person name="Kinzler K.W."/>
            <person name="Vogelstein B."/>
            <person name="Zhou S."/>
        </authorList>
    </citation>
    <scope>NUCLEOTIDE SEQUENCE [LARGE SCALE GENOMIC DNA]</scope>
    <source>
        <strain>NT</strain>
    </source>
</reference>
<name>ATPF_CLONN</name>
<comment type="function">
    <text evidence="1">F(1)F(0) ATP synthase produces ATP from ADP in the presence of a proton or sodium gradient. F-type ATPases consist of two structural domains, F(1) containing the extramembraneous catalytic core and F(0) containing the membrane proton channel, linked together by a central stalk and a peripheral stalk. During catalysis, ATP synthesis in the catalytic domain of F(1) is coupled via a rotary mechanism of the central stalk subunits to proton translocation.</text>
</comment>
<comment type="function">
    <text evidence="1">Component of the F(0) channel, it forms part of the peripheral stalk, linking F(1) to F(0).</text>
</comment>
<comment type="subunit">
    <text evidence="1">F-type ATPases have 2 components, F(1) - the catalytic core - and F(0) - the membrane proton channel. F(1) has five subunits: alpha(3), beta(3), gamma(1), delta(1), epsilon(1). F(0) has three main subunits: a(1), b(2) and c(10-14). The alpha and beta chains form an alternating ring which encloses part of the gamma chain. F(1) is attached to F(0) by a central stalk formed by the gamma and epsilon chains, while a peripheral stalk is formed by the delta and b chains.</text>
</comment>
<comment type="subcellular location">
    <subcellularLocation>
        <location evidence="1">Cell membrane</location>
        <topology evidence="1">Single-pass membrane protein</topology>
    </subcellularLocation>
</comment>
<comment type="similarity">
    <text evidence="1">Belongs to the ATPase B chain family.</text>
</comment>
<protein>
    <recommendedName>
        <fullName evidence="1">ATP synthase subunit b</fullName>
    </recommendedName>
    <alternativeName>
        <fullName evidence="1">ATP synthase F(0) sector subunit b</fullName>
    </alternativeName>
    <alternativeName>
        <fullName evidence="1">ATPase subunit I</fullName>
    </alternativeName>
    <alternativeName>
        <fullName evidence="1">F-type ATPase subunit b</fullName>
        <shortName evidence="1">F-ATPase subunit b</shortName>
    </alternativeName>
</protein>
<gene>
    <name evidence="1" type="primary">atpF</name>
    <name type="ordered locus">NT01CX_0534</name>
</gene>
<sequence length="159" mass="18654">MNFSIPTFVWTIINFLLLLVVLSYFLFKPVNEIIDKRSKDIEGDIEQARIDKDKAEELRIANEEEYKAAKKEGKIIVENYKAKAENVSEEIISDAHKEAEIIIERAKKEIQREREKAEYEIKNKTIELSLELSKKALERSIDEKMHRELIEEFISKVGN</sequence>
<evidence type="ECO:0000255" key="1">
    <source>
        <dbReference type="HAMAP-Rule" id="MF_01398"/>
    </source>
</evidence>
<dbReference type="EMBL" id="CP000382">
    <property type="protein sequence ID" value="ABK61291.1"/>
    <property type="molecule type" value="Genomic_DNA"/>
</dbReference>
<dbReference type="RefSeq" id="WP_011722980.1">
    <property type="nucleotide sequence ID" value="NC_008593.1"/>
</dbReference>
<dbReference type="SMR" id="A0Q2Z8"/>
<dbReference type="STRING" id="386415.NT01CX_0534"/>
<dbReference type="KEGG" id="cno:NT01CX_0534"/>
<dbReference type="eggNOG" id="COG0711">
    <property type="taxonomic scope" value="Bacteria"/>
</dbReference>
<dbReference type="HOGENOM" id="CLU_079215_4_0_9"/>
<dbReference type="Proteomes" id="UP000008220">
    <property type="component" value="Chromosome"/>
</dbReference>
<dbReference type="GO" id="GO:0005886">
    <property type="term" value="C:plasma membrane"/>
    <property type="evidence" value="ECO:0007669"/>
    <property type="project" value="UniProtKB-SubCell"/>
</dbReference>
<dbReference type="GO" id="GO:0045259">
    <property type="term" value="C:proton-transporting ATP synthase complex"/>
    <property type="evidence" value="ECO:0007669"/>
    <property type="project" value="UniProtKB-KW"/>
</dbReference>
<dbReference type="GO" id="GO:0046933">
    <property type="term" value="F:proton-transporting ATP synthase activity, rotational mechanism"/>
    <property type="evidence" value="ECO:0007669"/>
    <property type="project" value="UniProtKB-UniRule"/>
</dbReference>
<dbReference type="GO" id="GO:0046961">
    <property type="term" value="F:proton-transporting ATPase activity, rotational mechanism"/>
    <property type="evidence" value="ECO:0007669"/>
    <property type="project" value="TreeGrafter"/>
</dbReference>
<dbReference type="CDD" id="cd06503">
    <property type="entry name" value="ATP-synt_Fo_b"/>
    <property type="match status" value="1"/>
</dbReference>
<dbReference type="HAMAP" id="MF_01398">
    <property type="entry name" value="ATP_synth_b_bprime"/>
    <property type="match status" value="1"/>
</dbReference>
<dbReference type="InterPro" id="IPR002146">
    <property type="entry name" value="ATP_synth_b/b'su_bac/chlpt"/>
</dbReference>
<dbReference type="InterPro" id="IPR005864">
    <property type="entry name" value="ATP_synth_F0_bsu_bac"/>
</dbReference>
<dbReference type="InterPro" id="IPR050059">
    <property type="entry name" value="ATP_synthase_B_chain"/>
</dbReference>
<dbReference type="NCBIfam" id="TIGR01144">
    <property type="entry name" value="ATP_synt_b"/>
    <property type="match status" value="1"/>
</dbReference>
<dbReference type="NCBIfam" id="NF009992">
    <property type="entry name" value="PRK13461.1"/>
    <property type="match status" value="1"/>
</dbReference>
<dbReference type="PANTHER" id="PTHR33445:SF1">
    <property type="entry name" value="ATP SYNTHASE SUBUNIT B"/>
    <property type="match status" value="1"/>
</dbReference>
<dbReference type="PANTHER" id="PTHR33445">
    <property type="entry name" value="ATP SYNTHASE SUBUNIT B', CHLOROPLASTIC"/>
    <property type="match status" value="1"/>
</dbReference>
<dbReference type="Pfam" id="PF00430">
    <property type="entry name" value="ATP-synt_B"/>
    <property type="match status" value="1"/>
</dbReference>
<organism>
    <name type="scientific">Clostridium novyi (strain NT)</name>
    <dbReference type="NCBI Taxonomy" id="386415"/>
    <lineage>
        <taxon>Bacteria</taxon>
        <taxon>Bacillati</taxon>
        <taxon>Bacillota</taxon>
        <taxon>Clostridia</taxon>
        <taxon>Eubacteriales</taxon>
        <taxon>Clostridiaceae</taxon>
        <taxon>Clostridium</taxon>
    </lineage>
</organism>
<feature type="chain" id="PRO_0000368428" description="ATP synthase subunit b">
    <location>
        <begin position="1"/>
        <end position="159"/>
    </location>
</feature>
<feature type="transmembrane region" description="Helical" evidence="1">
    <location>
        <begin position="7"/>
        <end position="27"/>
    </location>
</feature>
<keyword id="KW-0066">ATP synthesis</keyword>
<keyword id="KW-1003">Cell membrane</keyword>
<keyword id="KW-0138">CF(0)</keyword>
<keyword id="KW-0375">Hydrogen ion transport</keyword>
<keyword id="KW-0406">Ion transport</keyword>
<keyword id="KW-0472">Membrane</keyword>
<keyword id="KW-1185">Reference proteome</keyword>
<keyword id="KW-0812">Transmembrane</keyword>
<keyword id="KW-1133">Transmembrane helix</keyword>
<keyword id="KW-0813">Transport</keyword>
<proteinExistence type="inferred from homology"/>